<sequence>MQQDVIALKIDDKIIDLQTAEAQGIEGGEPVYFDNSPEALEVIRHSAAHLMAQAIKELYPEAKFYVGPTIENGFYYDLKTETPITDKDLKNIEKKMKALAKKKFDITRYEISMEEAREKFKNDELKQAVLDMIPGDTVSIYKQGDFEDLCRGPHVPNTKYLHNVKLQKVAGAYLGGDSKNEMLTRVYGTAFATKEALQEYLKMLEEAAKRDHRKLGTELELWMFDEEVGAGMPIWLPNGALLRGNLEKLLYSAHIRREYLPVRGPELLRSHMWKISGHYYNYKENMYFTEIENDDPEKPADEYGIKPMNCLAHVKIFGHKVRSYKELPLRLFEFGTVHRHEKSGVLHGLLRVREFTQDDAHIFCRPDQIEEEVIKVLEFVDSIMERFGFNYEMEISTRPEKSIGSDEIWEKATESLKKALNSLNREYGIDEGGGAFYGPKIDIKITDAIGRKWQCGTIQVDFNLPERFDITYVDENNERVRPVMIHRAIIGSFERFIAILTEHYAGEFPTFIAPIKAIFVPIAESHVEYAKKLQKELLEADINTEIFASNDSLNKRIRNAEKRRVGYVVIIGDEEVETGTVAIRDRKKREQYKMTKGEFVEMIKNLSEVKL</sequence>
<accession>B9L5U7</accession>
<evidence type="ECO:0000255" key="1">
    <source>
        <dbReference type="HAMAP-Rule" id="MF_00184"/>
    </source>
</evidence>
<gene>
    <name evidence="1" type="primary">thrS</name>
    <name type="ordered locus">NAMH_1342</name>
</gene>
<comment type="function">
    <text evidence="1">Catalyzes the attachment of threonine to tRNA(Thr) in a two-step reaction: L-threonine is first activated by ATP to form Thr-AMP and then transferred to the acceptor end of tRNA(Thr). Also edits incorrectly charged L-seryl-tRNA(Thr).</text>
</comment>
<comment type="catalytic activity">
    <reaction evidence="1">
        <text>tRNA(Thr) + L-threonine + ATP = L-threonyl-tRNA(Thr) + AMP + diphosphate + H(+)</text>
        <dbReference type="Rhea" id="RHEA:24624"/>
        <dbReference type="Rhea" id="RHEA-COMP:9670"/>
        <dbReference type="Rhea" id="RHEA-COMP:9704"/>
        <dbReference type="ChEBI" id="CHEBI:15378"/>
        <dbReference type="ChEBI" id="CHEBI:30616"/>
        <dbReference type="ChEBI" id="CHEBI:33019"/>
        <dbReference type="ChEBI" id="CHEBI:57926"/>
        <dbReference type="ChEBI" id="CHEBI:78442"/>
        <dbReference type="ChEBI" id="CHEBI:78534"/>
        <dbReference type="ChEBI" id="CHEBI:456215"/>
        <dbReference type="EC" id="6.1.1.3"/>
    </reaction>
</comment>
<comment type="cofactor">
    <cofactor evidence="1">
        <name>Zn(2+)</name>
        <dbReference type="ChEBI" id="CHEBI:29105"/>
    </cofactor>
    <text evidence="1">Binds 1 zinc ion per subunit.</text>
</comment>
<comment type="subunit">
    <text evidence="1">Homodimer.</text>
</comment>
<comment type="subcellular location">
    <subcellularLocation>
        <location evidence="1">Cytoplasm</location>
    </subcellularLocation>
</comment>
<comment type="similarity">
    <text evidence="1">Belongs to the class-II aminoacyl-tRNA synthetase family.</text>
</comment>
<protein>
    <recommendedName>
        <fullName evidence="1">Threonine--tRNA ligase</fullName>
        <ecNumber evidence="1">6.1.1.3</ecNumber>
    </recommendedName>
    <alternativeName>
        <fullName evidence="1">Threonyl-tRNA synthetase</fullName>
        <shortName evidence="1">ThrRS</shortName>
    </alternativeName>
</protein>
<dbReference type="EC" id="6.1.1.3" evidence="1"/>
<dbReference type="EMBL" id="CP001279">
    <property type="protein sequence ID" value="ACM93506.1"/>
    <property type="molecule type" value="Genomic_DNA"/>
</dbReference>
<dbReference type="RefSeq" id="WP_015902558.1">
    <property type="nucleotide sequence ID" value="NC_012115.1"/>
</dbReference>
<dbReference type="SMR" id="B9L5U7"/>
<dbReference type="STRING" id="598659.NAMH_1342"/>
<dbReference type="KEGG" id="nam:NAMH_1342"/>
<dbReference type="eggNOG" id="COG0441">
    <property type="taxonomic scope" value="Bacteria"/>
</dbReference>
<dbReference type="HOGENOM" id="CLU_008554_3_1_7"/>
<dbReference type="OrthoDB" id="9802304at2"/>
<dbReference type="Proteomes" id="UP000000448">
    <property type="component" value="Chromosome"/>
</dbReference>
<dbReference type="GO" id="GO:0005829">
    <property type="term" value="C:cytosol"/>
    <property type="evidence" value="ECO:0007669"/>
    <property type="project" value="TreeGrafter"/>
</dbReference>
<dbReference type="GO" id="GO:0005524">
    <property type="term" value="F:ATP binding"/>
    <property type="evidence" value="ECO:0007669"/>
    <property type="project" value="UniProtKB-UniRule"/>
</dbReference>
<dbReference type="GO" id="GO:0046872">
    <property type="term" value="F:metal ion binding"/>
    <property type="evidence" value="ECO:0007669"/>
    <property type="project" value="UniProtKB-KW"/>
</dbReference>
<dbReference type="GO" id="GO:0004829">
    <property type="term" value="F:threonine-tRNA ligase activity"/>
    <property type="evidence" value="ECO:0007669"/>
    <property type="project" value="UniProtKB-UniRule"/>
</dbReference>
<dbReference type="GO" id="GO:0000049">
    <property type="term" value="F:tRNA binding"/>
    <property type="evidence" value="ECO:0007669"/>
    <property type="project" value="UniProtKB-KW"/>
</dbReference>
<dbReference type="GO" id="GO:0006435">
    <property type="term" value="P:threonyl-tRNA aminoacylation"/>
    <property type="evidence" value="ECO:0007669"/>
    <property type="project" value="UniProtKB-UniRule"/>
</dbReference>
<dbReference type="CDD" id="cd00860">
    <property type="entry name" value="ThrRS_anticodon"/>
    <property type="match status" value="1"/>
</dbReference>
<dbReference type="CDD" id="cd00771">
    <property type="entry name" value="ThrRS_core"/>
    <property type="match status" value="1"/>
</dbReference>
<dbReference type="FunFam" id="3.30.930.10:FF:000002">
    <property type="entry name" value="Threonine--tRNA ligase"/>
    <property type="match status" value="1"/>
</dbReference>
<dbReference type="FunFam" id="3.30.980.10:FF:000005">
    <property type="entry name" value="Threonyl-tRNA synthetase, mitochondrial"/>
    <property type="match status" value="1"/>
</dbReference>
<dbReference type="Gene3D" id="3.30.54.20">
    <property type="match status" value="1"/>
</dbReference>
<dbReference type="Gene3D" id="3.40.50.800">
    <property type="entry name" value="Anticodon-binding domain"/>
    <property type="match status" value="1"/>
</dbReference>
<dbReference type="Gene3D" id="3.30.930.10">
    <property type="entry name" value="Bira Bifunctional Protein, Domain 2"/>
    <property type="match status" value="1"/>
</dbReference>
<dbReference type="Gene3D" id="3.30.980.10">
    <property type="entry name" value="Threonyl-trna Synthetase, Chain A, domain 2"/>
    <property type="match status" value="1"/>
</dbReference>
<dbReference type="HAMAP" id="MF_00184">
    <property type="entry name" value="Thr_tRNA_synth"/>
    <property type="match status" value="1"/>
</dbReference>
<dbReference type="InterPro" id="IPR002314">
    <property type="entry name" value="aa-tRNA-synt_IIb"/>
</dbReference>
<dbReference type="InterPro" id="IPR006195">
    <property type="entry name" value="aa-tRNA-synth_II"/>
</dbReference>
<dbReference type="InterPro" id="IPR045864">
    <property type="entry name" value="aa-tRNA-synth_II/BPL/LPL"/>
</dbReference>
<dbReference type="InterPro" id="IPR004154">
    <property type="entry name" value="Anticodon-bd"/>
</dbReference>
<dbReference type="InterPro" id="IPR036621">
    <property type="entry name" value="Anticodon-bd_dom_sf"/>
</dbReference>
<dbReference type="InterPro" id="IPR002320">
    <property type="entry name" value="Thr-tRNA-ligase_IIa"/>
</dbReference>
<dbReference type="InterPro" id="IPR018163">
    <property type="entry name" value="Thr/Ala-tRNA-synth_IIc_edit"/>
</dbReference>
<dbReference type="InterPro" id="IPR047246">
    <property type="entry name" value="ThrRS_anticodon"/>
</dbReference>
<dbReference type="InterPro" id="IPR033728">
    <property type="entry name" value="ThrRS_core"/>
</dbReference>
<dbReference type="InterPro" id="IPR012947">
    <property type="entry name" value="tRNA_SAD"/>
</dbReference>
<dbReference type="NCBIfam" id="TIGR00418">
    <property type="entry name" value="thrS"/>
    <property type="match status" value="1"/>
</dbReference>
<dbReference type="PANTHER" id="PTHR11451:SF44">
    <property type="entry name" value="THREONINE--TRNA LIGASE, CHLOROPLASTIC_MITOCHONDRIAL 2"/>
    <property type="match status" value="1"/>
</dbReference>
<dbReference type="PANTHER" id="PTHR11451">
    <property type="entry name" value="THREONINE-TRNA LIGASE"/>
    <property type="match status" value="1"/>
</dbReference>
<dbReference type="Pfam" id="PF03129">
    <property type="entry name" value="HGTP_anticodon"/>
    <property type="match status" value="1"/>
</dbReference>
<dbReference type="Pfam" id="PF00587">
    <property type="entry name" value="tRNA-synt_2b"/>
    <property type="match status" value="1"/>
</dbReference>
<dbReference type="Pfam" id="PF07973">
    <property type="entry name" value="tRNA_SAD"/>
    <property type="match status" value="1"/>
</dbReference>
<dbReference type="PRINTS" id="PR01047">
    <property type="entry name" value="TRNASYNTHTHR"/>
</dbReference>
<dbReference type="SMART" id="SM00863">
    <property type="entry name" value="tRNA_SAD"/>
    <property type="match status" value="1"/>
</dbReference>
<dbReference type="SUPFAM" id="SSF52954">
    <property type="entry name" value="Class II aaRS ABD-related"/>
    <property type="match status" value="1"/>
</dbReference>
<dbReference type="SUPFAM" id="SSF55681">
    <property type="entry name" value="Class II aaRS and biotin synthetases"/>
    <property type="match status" value="1"/>
</dbReference>
<dbReference type="SUPFAM" id="SSF55186">
    <property type="entry name" value="ThrRS/AlaRS common domain"/>
    <property type="match status" value="1"/>
</dbReference>
<dbReference type="PROSITE" id="PS50862">
    <property type="entry name" value="AA_TRNA_LIGASE_II"/>
    <property type="match status" value="1"/>
</dbReference>
<keyword id="KW-0030">Aminoacyl-tRNA synthetase</keyword>
<keyword id="KW-0067">ATP-binding</keyword>
<keyword id="KW-0963">Cytoplasm</keyword>
<keyword id="KW-0436">Ligase</keyword>
<keyword id="KW-0479">Metal-binding</keyword>
<keyword id="KW-0547">Nucleotide-binding</keyword>
<keyword id="KW-0648">Protein biosynthesis</keyword>
<keyword id="KW-0694">RNA-binding</keyword>
<keyword id="KW-0820">tRNA-binding</keyword>
<keyword id="KW-0862">Zinc</keyword>
<feature type="chain" id="PRO_1000199558" description="Threonine--tRNA ligase">
    <location>
        <begin position="1"/>
        <end position="611"/>
    </location>
</feature>
<feature type="region of interest" description="Catalytic" evidence="1">
    <location>
        <begin position="211"/>
        <end position="509"/>
    </location>
</feature>
<feature type="binding site" evidence="1">
    <location>
        <position position="310"/>
    </location>
    <ligand>
        <name>Zn(2+)</name>
        <dbReference type="ChEBI" id="CHEBI:29105"/>
    </ligand>
</feature>
<feature type="binding site" evidence="1">
    <location>
        <position position="361"/>
    </location>
    <ligand>
        <name>Zn(2+)</name>
        <dbReference type="ChEBI" id="CHEBI:29105"/>
    </ligand>
</feature>
<feature type="binding site" evidence="1">
    <location>
        <position position="486"/>
    </location>
    <ligand>
        <name>Zn(2+)</name>
        <dbReference type="ChEBI" id="CHEBI:29105"/>
    </ligand>
</feature>
<proteinExistence type="inferred from homology"/>
<name>SYT_NAUPA</name>
<organism>
    <name type="scientific">Nautilia profundicola (strain ATCC BAA-1463 / DSM 18972 / AmH)</name>
    <dbReference type="NCBI Taxonomy" id="598659"/>
    <lineage>
        <taxon>Bacteria</taxon>
        <taxon>Pseudomonadati</taxon>
        <taxon>Campylobacterota</taxon>
        <taxon>Epsilonproteobacteria</taxon>
        <taxon>Nautiliales</taxon>
        <taxon>Nautiliaceae</taxon>
        <taxon>Nautilia</taxon>
    </lineage>
</organism>
<reference key="1">
    <citation type="journal article" date="2009" name="PLoS Genet.">
        <title>Adaptations to submarine hydrothermal environments exemplified by the genome of Nautilia profundicola.</title>
        <authorList>
            <person name="Campbell B.J."/>
            <person name="Smith J.L."/>
            <person name="Hanson T.E."/>
            <person name="Klotz M.G."/>
            <person name="Stein L.Y."/>
            <person name="Lee C.K."/>
            <person name="Wu D."/>
            <person name="Robinson J.M."/>
            <person name="Khouri H.M."/>
            <person name="Eisen J.A."/>
            <person name="Cary S.C."/>
        </authorList>
    </citation>
    <scope>NUCLEOTIDE SEQUENCE [LARGE SCALE GENOMIC DNA]</scope>
    <source>
        <strain>ATCC BAA-1463 / DSM 18972 / AmH</strain>
    </source>
</reference>